<name>Y696_RICPR</name>
<protein>
    <recommendedName>
        <fullName>Putative export ATP-binding/permease protein RP696</fullName>
        <ecNumber>7.-.-.-</ecNumber>
    </recommendedName>
</protein>
<reference key="1">
    <citation type="journal article" date="1998" name="Nature">
        <title>The genome sequence of Rickettsia prowazekii and the origin of mitochondria.</title>
        <authorList>
            <person name="Andersson S.G.E."/>
            <person name="Zomorodipour A."/>
            <person name="Andersson J.O."/>
            <person name="Sicheritz-Ponten T."/>
            <person name="Alsmark U.C.M."/>
            <person name="Podowski R.M."/>
            <person name="Naeslund A.K."/>
            <person name="Eriksson A.-S."/>
            <person name="Winkler H.H."/>
            <person name="Kurland C.G."/>
        </authorList>
    </citation>
    <scope>NUCLEOTIDE SEQUENCE [LARGE SCALE GENOMIC DNA]</scope>
    <source>
        <strain>Madrid E</strain>
    </source>
</reference>
<evidence type="ECO:0000250" key="1"/>
<evidence type="ECO:0000255" key="2">
    <source>
        <dbReference type="PROSITE-ProRule" id="PRU00434"/>
    </source>
</evidence>
<evidence type="ECO:0000255" key="3">
    <source>
        <dbReference type="PROSITE-ProRule" id="PRU00441"/>
    </source>
</evidence>
<evidence type="ECO:0000305" key="4"/>
<sequence length="576" mass="64928">MDIKLLYRLAKYLRFYKKDLIIVMISLLSVSASLLLIGSIFRDLIDRGLAEDNILSVNKSILYICLLIVILSVASFFRSYFINNVAEKIVNQIRKEAYSNLINYEIEEYEELKIGDIISRLTNDIDQIATLIVNFLSFFIRNSVMLIGSITLMFFESFKLASIVIITIPILLVPLIKFGKHVKALSKKALESKSLLVSDIDETFNNIRVIYAFNHQINKIADFDTKLQSYLIYCKTRLKIRALFFAISIAVIFLTITLIVWIGASDIVQGDLSAGQIISFIYYAIIAGVSSGGIFELLSEMHLPTTALERIITIIDKTSIVHNNYYALNNSDAISIEFKNVDFTYNSRPNLKVINNMSLKINSNKFVGIVGRSGAGKSTLIQLLLRFYRQENGTILINNQDISFVKPTDIRKFIAYVPQEASIFSDTIKSNIIFGNNKASDYEINEIIKITGIEEFSTKLHDGINTKIGEKGVRLSGGQKQRIAIARALLRKPKILLLDEAMSALDTMSEQKLLNAIKKIMKGNIIISIAHRISSIESADYILVIDKGGVVTEGSHYDLSKNSEIYRNICREQLTI</sequence>
<accession>Q9ZCM8</accession>
<gene>
    <name type="ordered locus">RP696</name>
</gene>
<organism>
    <name type="scientific">Rickettsia prowazekii (strain Madrid E)</name>
    <dbReference type="NCBI Taxonomy" id="272947"/>
    <lineage>
        <taxon>Bacteria</taxon>
        <taxon>Pseudomonadati</taxon>
        <taxon>Pseudomonadota</taxon>
        <taxon>Alphaproteobacteria</taxon>
        <taxon>Rickettsiales</taxon>
        <taxon>Rickettsiaceae</taxon>
        <taxon>Rickettsieae</taxon>
        <taxon>Rickettsia</taxon>
        <taxon>typhus group</taxon>
    </lineage>
</organism>
<keyword id="KW-0067">ATP-binding</keyword>
<keyword id="KW-0997">Cell inner membrane</keyword>
<keyword id="KW-1003">Cell membrane</keyword>
<keyword id="KW-0472">Membrane</keyword>
<keyword id="KW-0547">Nucleotide-binding</keyword>
<keyword id="KW-1185">Reference proteome</keyword>
<keyword id="KW-1278">Translocase</keyword>
<keyword id="KW-0812">Transmembrane</keyword>
<keyword id="KW-1133">Transmembrane helix</keyword>
<keyword id="KW-0813">Transport</keyword>
<proteinExistence type="inferred from homology"/>
<feature type="chain" id="PRO_0000278658" description="Putative export ATP-binding/permease protein RP696">
    <location>
        <begin position="1"/>
        <end position="576"/>
    </location>
</feature>
<feature type="transmembrane region" description="Helical" evidence="3">
    <location>
        <begin position="21"/>
        <end position="41"/>
    </location>
</feature>
<feature type="transmembrane region" description="Helical" evidence="3">
    <location>
        <begin position="61"/>
        <end position="81"/>
    </location>
</feature>
<feature type="transmembrane region" description="Helical" evidence="3">
    <location>
        <begin position="135"/>
        <end position="155"/>
    </location>
</feature>
<feature type="transmembrane region" description="Helical" evidence="3">
    <location>
        <begin position="158"/>
        <end position="178"/>
    </location>
</feature>
<feature type="transmembrane region" description="Helical" evidence="3">
    <location>
        <begin position="242"/>
        <end position="262"/>
    </location>
</feature>
<feature type="transmembrane region" description="Helical" evidence="3">
    <location>
        <begin position="277"/>
        <end position="297"/>
    </location>
</feature>
<feature type="domain" description="ABC transmembrane type-1" evidence="3">
    <location>
        <begin position="20"/>
        <end position="303"/>
    </location>
</feature>
<feature type="domain" description="ABC transporter" evidence="2">
    <location>
        <begin position="336"/>
        <end position="572"/>
    </location>
</feature>
<feature type="binding site" evidence="2">
    <location>
        <begin position="371"/>
        <end position="378"/>
    </location>
    <ligand>
        <name>ATP</name>
        <dbReference type="ChEBI" id="CHEBI:30616"/>
    </ligand>
</feature>
<dbReference type="EC" id="7.-.-.-"/>
<dbReference type="EMBL" id="AJ235272">
    <property type="protein sequence ID" value="CAA15132.1"/>
    <property type="molecule type" value="Genomic_DNA"/>
</dbReference>
<dbReference type="PIR" id="B71676">
    <property type="entry name" value="B71676"/>
</dbReference>
<dbReference type="RefSeq" id="NP_221056.1">
    <property type="nucleotide sequence ID" value="NC_000963.1"/>
</dbReference>
<dbReference type="RefSeq" id="WP_010886351.1">
    <property type="nucleotide sequence ID" value="NC_000963.1"/>
</dbReference>
<dbReference type="SMR" id="Q9ZCM8"/>
<dbReference type="STRING" id="272947.gene:17555773"/>
<dbReference type="EnsemblBacteria" id="CAA15132">
    <property type="protein sequence ID" value="CAA15132"/>
    <property type="gene ID" value="CAA15132"/>
</dbReference>
<dbReference type="KEGG" id="rpr:RP696"/>
<dbReference type="PATRIC" id="fig|272947.5.peg.717"/>
<dbReference type="eggNOG" id="COG1132">
    <property type="taxonomic scope" value="Bacteria"/>
</dbReference>
<dbReference type="HOGENOM" id="CLU_000604_84_3_5"/>
<dbReference type="OrthoDB" id="9804259at2"/>
<dbReference type="Proteomes" id="UP000002480">
    <property type="component" value="Chromosome"/>
</dbReference>
<dbReference type="GO" id="GO:0005886">
    <property type="term" value="C:plasma membrane"/>
    <property type="evidence" value="ECO:0007669"/>
    <property type="project" value="UniProtKB-SubCell"/>
</dbReference>
<dbReference type="GO" id="GO:0015421">
    <property type="term" value="F:ABC-type oligopeptide transporter activity"/>
    <property type="evidence" value="ECO:0007669"/>
    <property type="project" value="TreeGrafter"/>
</dbReference>
<dbReference type="GO" id="GO:0005524">
    <property type="term" value="F:ATP binding"/>
    <property type="evidence" value="ECO:0007669"/>
    <property type="project" value="UniProtKB-KW"/>
</dbReference>
<dbReference type="GO" id="GO:0016887">
    <property type="term" value="F:ATP hydrolysis activity"/>
    <property type="evidence" value="ECO:0007669"/>
    <property type="project" value="InterPro"/>
</dbReference>
<dbReference type="CDD" id="cd18575">
    <property type="entry name" value="ABC_6TM_bac_exporter_ABCB8_10_like"/>
    <property type="match status" value="1"/>
</dbReference>
<dbReference type="FunFam" id="3.40.50.300:FF:000967">
    <property type="entry name" value="ABC multidrug transporter mdr4"/>
    <property type="match status" value="1"/>
</dbReference>
<dbReference type="Gene3D" id="1.20.1560.10">
    <property type="entry name" value="ABC transporter type 1, transmembrane domain"/>
    <property type="match status" value="1"/>
</dbReference>
<dbReference type="Gene3D" id="3.40.50.300">
    <property type="entry name" value="P-loop containing nucleotide triphosphate hydrolases"/>
    <property type="match status" value="1"/>
</dbReference>
<dbReference type="InterPro" id="IPR003593">
    <property type="entry name" value="AAA+_ATPase"/>
</dbReference>
<dbReference type="InterPro" id="IPR011527">
    <property type="entry name" value="ABC1_TM_dom"/>
</dbReference>
<dbReference type="InterPro" id="IPR036640">
    <property type="entry name" value="ABC1_TM_sf"/>
</dbReference>
<dbReference type="InterPro" id="IPR003439">
    <property type="entry name" value="ABC_transporter-like_ATP-bd"/>
</dbReference>
<dbReference type="InterPro" id="IPR017871">
    <property type="entry name" value="ABC_transporter-like_CS"/>
</dbReference>
<dbReference type="InterPro" id="IPR027417">
    <property type="entry name" value="P-loop_NTPase"/>
</dbReference>
<dbReference type="InterPro" id="IPR039421">
    <property type="entry name" value="Type_1_exporter"/>
</dbReference>
<dbReference type="PANTHER" id="PTHR43394:SF1">
    <property type="entry name" value="ATP-BINDING CASSETTE SUB-FAMILY B MEMBER 10, MITOCHONDRIAL"/>
    <property type="match status" value="1"/>
</dbReference>
<dbReference type="PANTHER" id="PTHR43394">
    <property type="entry name" value="ATP-DEPENDENT PERMEASE MDL1, MITOCHONDRIAL"/>
    <property type="match status" value="1"/>
</dbReference>
<dbReference type="Pfam" id="PF00664">
    <property type="entry name" value="ABC_membrane"/>
    <property type="match status" value="1"/>
</dbReference>
<dbReference type="Pfam" id="PF00005">
    <property type="entry name" value="ABC_tran"/>
    <property type="match status" value="1"/>
</dbReference>
<dbReference type="SMART" id="SM00382">
    <property type="entry name" value="AAA"/>
    <property type="match status" value="1"/>
</dbReference>
<dbReference type="SUPFAM" id="SSF90123">
    <property type="entry name" value="ABC transporter transmembrane region"/>
    <property type="match status" value="1"/>
</dbReference>
<dbReference type="SUPFAM" id="SSF52540">
    <property type="entry name" value="P-loop containing nucleoside triphosphate hydrolases"/>
    <property type="match status" value="1"/>
</dbReference>
<dbReference type="PROSITE" id="PS50929">
    <property type="entry name" value="ABC_TM1F"/>
    <property type="match status" value="1"/>
</dbReference>
<dbReference type="PROSITE" id="PS00211">
    <property type="entry name" value="ABC_TRANSPORTER_1"/>
    <property type="match status" value="1"/>
</dbReference>
<dbReference type="PROSITE" id="PS50893">
    <property type="entry name" value="ABC_TRANSPORTER_2"/>
    <property type="match status" value="1"/>
</dbReference>
<comment type="function">
    <text evidence="1">Part of an ABC transporter complex. Transmembrane domains (TMD) form a pore in the inner membrane and the ATP-binding domain (NBD) is responsible for energy generation (By similarity).</text>
</comment>
<comment type="subunit">
    <text evidence="1">Homodimer.</text>
</comment>
<comment type="subcellular location">
    <subcellularLocation>
        <location evidence="1">Cell inner membrane</location>
        <topology evidence="3">Multi-pass membrane protein</topology>
    </subcellularLocation>
</comment>
<comment type="domain">
    <text>The ATP-binding domain (NBD) and the transmembrane domain (TMD) are fused.</text>
</comment>
<comment type="similarity">
    <text evidence="4">Belongs to the ABC transporter superfamily.</text>
</comment>